<keyword id="KW-0002">3D-structure</keyword>
<keyword id="KW-0037">Angiogenesis</keyword>
<keyword id="KW-0968">Cytoplasmic vesicle</keyword>
<keyword id="KW-0217">Developmental protein</keyword>
<keyword id="KW-0221">Differentiation</keyword>
<keyword id="KW-1015">Disulfide bond</keyword>
<keyword id="KW-0238">DNA-binding</keyword>
<keyword id="KW-0255">Endonuclease</keyword>
<keyword id="KW-0378">Hydrolase</keyword>
<keyword id="KW-0479">Metal-binding</keyword>
<keyword id="KW-0540">Nuclease</keyword>
<keyword id="KW-0539">Nucleus</keyword>
<keyword id="KW-0652">Protein synthesis inhibitor</keyword>
<keyword id="KW-0873">Pyrrolidone carboxylic acid</keyword>
<keyword id="KW-1185">Reference proteome</keyword>
<keyword id="KW-0964">Secreted</keyword>
<keyword id="KW-0732">Signal</keyword>
<keyword id="KW-0862">Zinc</keyword>
<feature type="signal peptide" evidence="4">
    <location>
        <begin position="1"/>
        <end position="24"/>
    </location>
</feature>
<feature type="chain" id="PRO_0000030859" description="Angiogenin-3">
    <location>
        <begin position="25"/>
        <end position="145"/>
    </location>
</feature>
<feature type="short sequence motif" description="Nucleolar localization signal" evidence="1">
    <location>
        <begin position="55"/>
        <end position="59"/>
    </location>
</feature>
<feature type="active site" description="Proton acceptor" evidence="8">
    <location>
        <position position="37"/>
    </location>
</feature>
<feature type="active site" description="Proton donor" evidence="8">
    <location>
        <position position="137"/>
    </location>
</feature>
<feature type="binding site" evidence="6">
    <location>
        <position position="65"/>
    </location>
    <ligand>
        <name>Zn(2+)</name>
        <dbReference type="ChEBI" id="CHEBI:29105"/>
    </ligand>
</feature>
<feature type="binding site" evidence="6">
    <location>
        <position position="106"/>
    </location>
    <ligand>
        <name>Zn(2+)</name>
        <dbReference type="ChEBI" id="CHEBI:29105"/>
    </ligand>
</feature>
<feature type="site" description="Critical for catalytic activity" evidence="8">
    <location>
        <position position="64"/>
    </location>
</feature>
<feature type="modified residue" description="Pyrrolidone carboxylic acid" evidence="1">
    <location>
        <position position="25"/>
    </location>
</feature>
<feature type="disulfide bond" evidence="6">
    <location>
        <begin position="50"/>
        <end position="104"/>
    </location>
</feature>
<feature type="disulfide bond" evidence="6">
    <location>
        <begin position="63"/>
        <end position="115"/>
    </location>
</feature>
<feature type="disulfide bond" evidence="6">
    <location>
        <begin position="81"/>
        <end position="130"/>
    </location>
</feature>
<feature type="helix" evidence="9">
    <location>
        <begin position="28"/>
        <end position="37"/>
    </location>
</feature>
<feature type="helix" evidence="9">
    <location>
        <begin position="47"/>
        <end position="56"/>
    </location>
</feature>
<feature type="turn" evidence="9">
    <location>
        <begin position="60"/>
        <end position="63"/>
    </location>
</feature>
<feature type="strand" evidence="9">
    <location>
        <begin position="65"/>
        <end position="70"/>
    </location>
</feature>
<feature type="helix" evidence="9">
    <location>
        <begin position="74"/>
        <end position="78"/>
    </location>
</feature>
<feature type="helix" evidence="9">
    <location>
        <begin position="79"/>
        <end position="81"/>
    </location>
</feature>
<feature type="turn" evidence="9">
    <location>
        <begin position="82"/>
        <end position="84"/>
    </location>
</feature>
<feature type="strand" evidence="9">
    <location>
        <begin position="85"/>
        <end position="88"/>
    </location>
</feature>
<feature type="turn" evidence="9">
    <location>
        <begin position="89"/>
        <end position="91"/>
    </location>
</feature>
<feature type="strand" evidence="9">
    <location>
        <begin position="92"/>
        <end position="97"/>
    </location>
</feature>
<feature type="strand" evidence="9">
    <location>
        <begin position="99"/>
        <end position="109"/>
    </location>
</feature>
<feature type="strand" evidence="9">
    <location>
        <begin position="111"/>
        <end position="114"/>
    </location>
</feature>
<feature type="strand" evidence="9">
    <location>
        <begin position="116"/>
        <end position="124"/>
    </location>
</feature>
<feature type="strand" evidence="9">
    <location>
        <begin position="127"/>
        <end position="131"/>
    </location>
</feature>
<feature type="strand" evidence="9">
    <location>
        <begin position="134"/>
        <end position="138"/>
    </location>
</feature>
<reference key="1">
    <citation type="journal article" date="1997" name="Mol. Cell. Biol.">
        <title>E2a-Pbx1 induces aberrant expression of tissue-specific and developmentally regulated genes when expressed in NIH 3T3 fibroblasts.</title>
        <authorList>
            <person name="Fu X."/>
            <person name="Kamps M.P."/>
        </authorList>
    </citation>
    <scope>NUCLEOTIDE SEQUENCE [MRNA]</scope>
    <source>
        <strain>BALB/cJ</strain>
    </source>
</reference>
<reference key="2">
    <citation type="journal article" date="2001" name="Protein Expr. Purif.">
        <title>High-level expression of three members of the murine angiogenin family in Escherichia coli and purification of the recombinant proteins.</title>
        <authorList>
            <person name="Holloway D.E."/>
            <person name="Hares M.C."/>
            <person name="Shapiro R."/>
            <person name="Subramanian V."/>
            <person name="Acharya K.R."/>
        </authorList>
    </citation>
    <scope>FUNCTION</scope>
</reference>
<reference key="3">
    <citation type="journal article" date="2013" name="FEBS J.">
        <title>Crystal structures of murine angiogenin-2 and -3-probing 'structure-- function' relationships amongst angiogenin homologues.</title>
        <authorList>
            <person name="Iyer S."/>
            <person name="Holloway D.E."/>
            <person name="Acharya K.R."/>
        </authorList>
    </citation>
    <scope>X-RAY CRYSTALLOGRAPHY (1.8 ANGSTROMS) OF 25-145</scope>
    <scope>FUNCTION</scope>
    <scope>ACTIVE SITE</scope>
    <scope>SUBUNIT</scope>
    <scope>DISULFIDE BONDS</scope>
    <scope>ACTIVITY REGULATION</scope>
    <scope>ZINC-BINDING SITES</scope>
</reference>
<comment type="function">
    <text evidence="5 6">Has low ribonuclease activity (in vitro).</text>
</comment>
<comment type="activity regulation">
    <text evidence="6">Divalent metal ions, such as Cu2+ and Zn2+, may inhibit the ribonucleolytic activity.</text>
</comment>
<comment type="subcellular location">
    <subcellularLocation>
        <location evidence="3">Cytoplasmic vesicle</location>
        <location evidence="3">Secretory vesicle lumen</location>
    </subcellularLocation>
    <subcellularLocation>
        <location evidence="2">Secreted</location>
    </subcellularLocation>
    <subcellularLocation>
        <location evidence="1">Nucleus</location>
        <location evidence="1">Nucleolus</location>
    </subcellularLocation>
    <text evidence="1">Rapidly endocytosed by target cells and translocated to the nucleus where it accumulates in the nucleolus and binds to DNA (By similarity).</text>
</comment>
<comment type="similarity">
    <text evidence="7">Belongs to the pancreatic ribonuclease family.</text>
</comment>
<proteinExistence type="evidence at protein level"/>
<protein>
    <recommendedName>
        <fullName>Angiogenin-3</fullName>
        <ecNumber evidence="5 6">3.1.27.-</ecNumber>
    </recommendedName>
    <alternativeName>
        <fullName>Angiogenin-related protein 2</fullName>
    </alternativeName>
    <alternativeName>
        <fullName>EF-5</fullName>
    </alternativeName>
</protein>
<dbReference type="EC" id="3.1.27.-" evidence="5 6"/>
<dbReference type="EMBL" id="U72672">
    <property type="protein sequence ID" value="AAC05794.1"/>
    <property type="molecule type" value="mRNA"/>
</dbReference>
<dbReference type="RefSeq" id="NP_001116866.2">
    <property type="nucleotide sequence ID" value="NM_001123394.2"/>
</dbReference>
<dbReference type="PDB" id="3ZBW">
    <property type="method" value="X-ray"/>
    <property type="resolution" value="1.80 A"/>
    <property type="chains" value="A/B=25-145"/>
</dbReference>
<dbReference type="PDBsum" id="3ZBW"/>
<dbReference type="SMR" id="P97802"/>
<dbReference type="FunCoup" id="P97802">
    <property type="interactions" value="26"/>
</dbReference>
<dbReference type="MINT" id="P97802"/>
<dbReference type="STRING" id="10090.ENSMUSP00000067008"/>
<dbReference type="CPTAC" id="non-CPTAC-3367"/>
<dbReference type="PaxDb" id="10090-ENSMUSP00000067008"/>
<dbReference type="PeptideAtlas" id="P97802"/>
<dbReference type="DNASU" id="11730"/>
<dbReference type="GeneID" id="11730"/>
<dbReference type="KEGG" id="mmu:11730"/>
<dbReference type="UCSC" id="uc011zjf.1">
    <property type="organism name" value="mouse"/>
</dbReference>
<dbReference type="AGR" id="MGI:1201793"/>
<dbReference type="CTD" id="11730"/>
<dbReference type="MGI" id="MGI:1201793">
    <property type="gene designation" value="Ang3"/>
</dbReference>
<dbReference type="eggNOG" id="ENOG502S9Q1">
    <property type="taxonomic scope" value="Eukaryota"/>
</dbReference>
<dbReference type="InParanoid" id="P97802"/>
<dbReference type="PhylomeDB" id="P97802"/>
<dbReference type="BioGRID-ORCS" id="11730">
    <property type="hits" value="1 hit in 17 CRISPR screens"/>
</dbReference>
<dbReference type="EvolutionaryTrace" id="P97802"/>
<dbReference type="PRO" id="PR:P97802"/>
<dbReference type="Proteomes" id="UP000000589">
    <property type="component" value="Unplaced"/>
</dbReference>
<dbReference type="RNAct" id="P97802">
    <property type="molecule type" value="protein"/>
</dbReference>
<dbReference type="GO" id="GO:0031410">
    <property type="term" value="C:cytoplasmic vesicle"/>
    <property type="evidence" value="ECO:0007669"/>
    <property type="project" value="UniProtKB-KW"/>
</dbReference>
<dbReference type="GO" id="GO:0005576">
    <property type="term" value="C:extracellular region"/>
    <property type="evidence" value="ECO:0007669"/>
    <property type="project" value="UniProtKB-SubCell"/>
</dbReference>
<dbReference type="GO" id="GO:0005730">
    <property type="term" value="C:nucleolus"/>
    <property type="evidence" value="ECO:0007669"/>
    <property type="project" value="UniProtKB-SubCell"/>
</dbReference>
<dbReference type="GO" id="GO:0003677">
    <property type="term" value="F:DNA binding"/>
    <property type="evidence" value="ECO:0007669"/>
    <property type="project" value="UniProtKB-KW"/>
</dbReference>
<dbReference type="GO" id="GO:0004519">
    <property type="term" value="F:endonuclease activity"/>
    <property type="evidence" value="ECO:0007669"/>
    <property type="project" value="UniProtKB-KW"/>
</dbReference>
<dbReference type="GO" id="GO:0046872">
    <property type="term" value="F:metal ion binding"/>
    <property type="evidence" value="ECO:0007669"/>
    <property type="project" value="UniProtKB-KW"/>
</dbReference>
<dbReference type="GO" id="GO:0004540">
    <property type="term" value="F:RNA nuclease activity"/>
    <property type="evidence" value="ECO:0000314"/>
    <property type="project" value="MGI"/>
</dbReference>
<dbReference type="GO" id="GO:0001525">
    <property type="term" value="P:angiogenesis"/>
    <property type="evidence" value="ECO:0007669"/>
    <property type="project" value="UniProtKB-KW"/>
</dbReference>
<dbReference type="GO" id="GO:0030154">
    <property type="term" value="P:cell differentiation"/>
    <property type="evidence" value="ECO:0007669"/>
    <property type="project" value="UniProtKB-KW"/>
</dbReference>
<dbReference type="GO" id="GO:0017148">
    <property type="term" value="P:negative regulation of translation"/>
    <property type="evidence" value="ECO:0007669"/>
    <property type="project" value="UniProtKB-KW"/>
</dbReference>
<dbReference type="CDD" id="cd06265">
    <property type="entry name" value="RNase_A_canonical"/>
    <property type="match status" value="1"/>
</dbReference>
<dbReference type="FunFam" id="3.10.130.10:FF:000001">
    <property type="entry name" value="Ribonuclease pancreatic"/>
    <property type="match status" value="1"/>
</dbReference>
<dbReference type="Gene3D" id="3.10.130.10">
    <property type="entry name" value="Ribonuclease A-like domain"/>
    <property type="match status" value="1"/>
</dbReference>
<dbReference type="InterPro" id="IPR001427">
    <property type="entry name" value="RNaseA"/>
</dbReference>
<dbReference type="InterPro" id="IPR036816">
    <property type="entry name" value="RNaseA-like_dom_sf"/>
</dbReference>
<dbReference type="InterPro" id="IPR023411">
    <property type="entry name" value="RNaseA_AS"/>
</dbReference>
<dbReference type="InterPro" id="IPR023412">
    <property type="entry name" value="RNaseA_domain"/>
</dbReference>
<dbReference type="PANTHER" id="PTHR11437:SF60">
    <property type="entry name" value="ANGIOGENIN"/>
    <property type="match status" value="1"/>
</dbReference>
<dbReference type="PANTHER" id="PTHR11437">
    <property type="entry name" value="RIBONUCLEASE"/>
    <property type="match status" value="1"/>
</dbReference>
<dbReference type="Pfam" id="PF00074">
    <property type="entry name" value="RnaseA"/>
    <property type="match status" value="1"/>
</dbReference>
<dbReference type="PRINTS" id="PR00794">
    <property type="entry name" value="RIBONUCLEASE"/>
</dbReference>
<dbReference type="SMART" id="SM00092">
    <property type="entry name" value="RNAse_Pc"/>
    <property type="match status" value="1"/>
</dbReference>
<dbReference type="SUPFAM" id="SSF54076">
    <property type="entry name" value="RNase A-like"/>
    <property type="match status" value="1"/>
</dbReference>
<dbReference type="PROSITE" id="PS00127">
    <property type="entry name" value="RNASE_PANCREATIC"/>
    <property type="match status" value="1"/>
</dbReference>
<evidence type="ECO:0000250" key="1">
    <source>
        <dbReference type="UniProtKB" id="P03950"/>
    </source>
</evidence>
<evidence type="ECO:0000250" key="2">
    <source>
        <dbReference type="UniProtKB" id="P10152"/>
    </source>
</evidence>
<evidence type="ECO:0000250" key="3">
    <source>
        <dbReference type="UniProtKB" id="Q3TMQ6"/>
    </source>
</evidence>
<evidence type="ECO:0000255" key="4"/>
<evidence type="ECO:0000269" key="5">
    <source>
    </source>
</evidence>
<evidence type="ECO:0000269" key="6">
    <source>
    </source>
</evidence>
<evidence type="ECO:0000305" key="7"/>
<evidence type="ECO:0000305" key="8">
    <source>
    </source>
</evidence>
<evidence type="ECO:0007829" key="9">
    <source>
        <dbReference type="PDB" id="3ZBW"/>
    </source>
</evidence>
<organism>
    <name type="scientific">Mus musculus</name>
    <name type="common">Mouse</name>
    <dbReference type="NCBI Taxonomy" id="10090"/>
    <lineage>
        <taxon>Eukaryota</taxon>
        <taxon>Metazoa</taxon>
        <taxon>Chordata</taxon>
        <taxon>Craniata</taxon>
        <taxon>Vertebrata</taxon>
        <taxon>Euteleostomi</taxon>
        <taxon>Mammalia</taxon>
        <taxon>Eutheria</taxon>
        <taxon>Euarchontoglires</taxon>
        <taxon>Glires</taxon>
        <taxon>Rodentia</taxon>
        <taxon>Myomorpha</taxon>
        <taxon>Muroidea</taxon>
        <taxon>Muridae</taxon>
        <taxon>Murinae</taxon>
        <taxon>Mus</taxon>
        <taxon>Mus</taxon>
    </lineage>
</organism>
<accession>P97802</accession>
<gene>
    <name type="primary">Ang3</name>
    <name type="synonym">Angl</name>
</gene>
<name>ANG3_MOUSE</name>
<sequence>MVMSPGSLLLVFLLSLDVIPPTLAQDNYRYIKFLTQHYDAKPTGRDYRYCESMMKKRKLTSPCKEVNTFIHDTKNNIKAICGENGRPYGVNFRISNSRFQVTTCTHKGGSPRPPCQYNAFKDFRYIVIACEDGWPVHFDESFISP</sequence>